<comment type="subunit">
    <text evidence="1">May form a heterooligomeric complex that consists of seven subunits: mnhA2, mnhB2, mnhC2, mnhD2, mnhE2, mnhF2 and mnhG2.</text>
</comment>
<comment type="subcellular location">
    <subcellularLocation>
        <location evidence="3">Cell membrane</location>
        <topology evidence="3">Multi-pass membrane protein</topology>
    </subcellularLocation>
</comment>
<comment type="similarity">
    <text evidence="3">Belongs to the CPA3 antiporters (TC 2.A.63) subunit B family.</text>
</comment>
<gene>
    <name type="primary">mnhB2</name>
    <name type="synonym">mrpB2</name>
    <name type="ordered locus">SAOUHSC_00626</name>
</gene>
<keyword id="KW-0050">Antiport</keyword>
<keyword id="KW-1003">Cell membrane</keyword>
<keyword id="KW-0406">Ion transport</keyword>
<keyword id="KW-0472">Membrane</keyword>
<keyword id="KW-1185">Reference proteome</keyword>
<keyword id="KW-0812">Transmembrane</keyword>
<keyword id="KW-1133">Transmembrane helix</keyword>
<keyword id="KW-0813">Transport</keyword>
<proteinExistence type="inferred from homology"/>
<dbReference type="EMBL" id="CP000253">
    <property type="protein sequence ID" value="ABD29763.1"/>
    <property type="molecule type" value="Genomic_DNA"/>
</dbReference>
<dbReference type="RefSeq" id="WP_000661906.1">
    <property type="nucleotide sequence ID" value="NZ_LS483365.1"/>
</dbReference>
<dbReference type="RefSeq" id="YP_499188.1">
    <property type="nucleotide sequence ID" value="NC_007795.1"/>
</dbReference>
<dbReference type="SMR" id="Q2G214"/>
<dbReference type="STRING" id="93061.SAOUHSC_00626"/>
<dbReference type="PaxDb" id="1280-SAXN108_0690"/>
<dbReference type="GeneID" id="3920036"/>
<dbReference type="KEGG" id="sao:SAOUHSC_00626"/>
<dbReference type="PATRIC" id="fig|93061.5.peg.562"/>
<dbReference type="eggNOG" id="COG2111">
    <property type="taxonomic scope" value="Bacteria"/>
</dbReference>
<dbReference type="HOGENOM" id="CLU_101659_1_1_9"/>
<dbReference type="OrthoDB" id="9798859at2"/>
<dbReference type="PRO" id="PR:Q2G214"/>
<dbReference type="Proteomes" id="UP000008816">
    <property type="component" value="Chromosome"/>
</dbReference>
<dbReference type="GO" id="GO:0005886">
    <property type="term" value="C:plasma membrane"/>
    <property type="evidence" value="ECO:0007669"/>
    <property type="project" value="UniProtKB-SubCell"/>
</dbReference>
<dbReference type="GO" id="GO:0015297">
    <property type="term" value="F:antiporter activity"/>
    <property type="evidence" value="ECO:0007669"/>
    <property type="project" value="UniProtKB-KW"/>
</dbReference>
<dbReference type="GO" id="GO:0006811">
    <property type="term" value="P:monoatomic ion transport"/>
    <property type="evidence" value="ECO:0007669"/>
    <property type="project" value="UniProtKB-KW"/>
</dbReference>
<dbReference type="InterPro" id="IPR050622">
    <property type="entry name" value="CPA3_antiporter_subunitB"/>
</dbReference>
<dbReference type="InterPro" id="IPR007182">
    <property type="entry name" value="MnhB"/>
</dbReference>
<dbReference type="NCBIfam" id="NF009223">
    <property type="entry name" value="PRK12573.1"/>
    <property type="match status" value="1"/>
</dbReference>
<dbReference type="NCBIfam" id="NF009224">
    <property type="entry name" value="PRK12574.1"/>
    <property type="match status" value="1"/>
</dbReference>
<dbReference type="PANTHER" id="PTHR33932">
    <property type="entry name" value="NA(+)/H(+) ANTIPORTER SUBUNIT B"/>
    <property type="match status" value="1"/>
</dbReference>
<dbReference type="PANTHER" id="PTHR33932:SF4">
    <property type="entry name" value="NA(+)_H(+) ANTIPORTER SUBUNIT B"/>
    <property type="match status" value="1"/>
</dbReference>
<dbReference type="Pfam" id="PF04039">
    <property type="entry name" value="MnhB"/>
    <property type="match status" value="1"/>
</dbReference>
<organism>
    <name type="scientific">Staphylococcus aureus (strain NCTC 8325 / PS 47)</name>
    <dbReference type="NCBI Taxonomy" id="93061"/>
    <lineage>
        <taxon>Bacteria</taxon>
        <taxon>Bacillati</taxon>
        <taxon>Bacillota</taxon>
        <taxon>Bacilli</taxon>
        <taxon>Bacillales</taxon>
        <taxon>Staphylococcaceae</taxon>
        <taxon>Staphylococcus</taxon>
    </lineage>
</organism>
<evidence type="ECO:0000250" key="1"/>
<evidence type="ECO:0000255" key="2"/>
<evidence type="ECO:0000305" key="3"/>
<accession>Q2G214</accession>
<protein>
    <recommendedName>
        <fullName>Putative antiporter subunit mnhB2</fullName>
    </recommendedName>
    <alternativeName>
        <fullName>Mrp complex subunit B2</fullName>
    </alternativeName>
    <alternativeName>
        <fullName>Putative NADH-ubiquinone oxidoreductase subunit mnhB2</fullName>
    </alternativeName>
</protein>
<sequence>MKENDVVLRTVTKLVVFILLTFGFYVFFAGHNNPGGGFIGGLIFSSAFILMFLAFNVEEVLESLPIDFRILMIIGALVSSITAIIPMFFGKPFLSQYETTWILPILGQIHVSTITLFELGILFSVVGVIVTVMLSLSGGRS</sequence>
<name>MNHB2_STAA8</name>
<reference key="1">
    <citation type="book" date="2006" name="Gram positive pathogens, 2nd edition">
        <title>The Staphylococcus aureus NCTC 8325 genome.</title>
        <editorList>
            <person name="Fischetti V."/>
            <person name="Novick R."/>
            <person name="Ferretti J."/>
            <person name="Portnoy D."/>
            <person name="Rood J."/>
        </editorList>
        <authorList>
            <person name="Gillaspy A.F."/>
            <person name="Worrell V."/>
            <person name="Orvis J."/>
            <person name="Roe B.A."/>
            <person name="Dyer D.W."/>
            <person name="Iandolo J.J."/>
        </authorList>
    </citation>
    <scope>NUCLEOTIDE SEQUENCE [LARGE SCALE GENOMIC DNA]</scope>
    <source>
        <strain>NCTC 8325 / PS 47</strain>
    </source>
</reference>
<feature type="chain" id="PRO_0000372277" description="Putative antiporter subunit mnhB2">
    <location>
        <begin position="1"/>
        <end position="141"/>
    </location>
</feature>
<feature type="transmembrane region" description="Helical" evidence="2">
    <location>
        <begin position="10"/>
        <end position="30"/>
    </location>
</feature>
<feature type="transmembrane region" description="Helical" evidence="2">
    <location>
        <begin position="35"/>
        <end position="55"/>
    </location>
</feature>
<feature type="transmembrane region" description="Helical" evidence="2">
    <location>
        <begin position="70"/>
        <end position="90"/>
    </location>
</feature>
<feature type="transmembrane region" description="Helical" evidence="2">
    <location>
        <begin position="114"/>
        <end position="134"/>
    </location>
</feature>